<feature type="chain" id="PRO_0000055735" description="Protein kinase C-like 1B">
    <location>
        <begin position="1"/>
        <end position="707"/>
    </location>
</feature>
<feature type="domain" description="C2" evidence="1">
    <location>
        <begin position="1"/>
        <end position="114"/>
    </location>
</feature>
<feature type="domain" description="Protein kinase" evidence="2">
    <location>
        <begin position="378"/>
        <end position="638"/>
    </location>
</feature>
<feature type="domain" description="AGC-kinase C-terminal" evidence="4">
    <location>
        <begin position="639"/>
        <end position="707"/>
    </location>
</feature>
<feature type="zinc finger region" description="Phorbol-ester/DAG-type 1" evidence="3">
    <location>
        <begin position="170"/>
        <end position="220"/>
    </location>
</feature>
<feature type="zinc finger region" description="Phorbol-ester/DAG-type 2" evidence="3">
    <location>
        <begin position="248"/>
        <end position="298"/>
    </location>
</feature>
<feature type="region of interest" description="Disordered" evidence="6">
    <location>
        <begin position="323"/>
        <end position="368"/>
    </location>
</feature>
<feature type="compositionally biased region" description="Polar residues" evidence="6">
    <location>
        <begin position="330"/>
        <end position="365"/>
    </location>
</feature>
<feature type="active site" description="Proton acceptor" evidence="2 5">
    <location>
        <position position="502"/>
    </location>
</feature>
<feature type="binding site" evidence="2">
    <location>
        <begin position="384"/>
        <end position="392"/>
    </location>
    <ligand>
        <name>ATP</name>
        <dbReference type="ChEBI" id="CHEBI:30616"/>
    </ligand>
</feature>
<feature type="binding site" evidence="2">
    <location>
        <position position="407"/>
    </location>
    <ligand>
        <name>ATP</name>
        <dbReference type="ChEBI" id="CHEBI:30616"/>
    </ligand>
</feature>
<feature type="splice variant" id="VSP_044041" description="In isoform b." evidence="14">
    <original>LFTGTVRVRVLEARQLRPTEWSRRFRQDEAATAAIDSYVNVDWDEYHIGKTQVRPKTNEPRWNEEFTASGVHQGKAIGFSVFHSCVMPPDDFVANTRIAFDQLKIGSANDIWVDLEPHGQLHVVVEMHGTNVE</original>
    <variation>SFDCLVYDEYAPSSKSRNSSNKAKVKKKNSWGFWVKQDSTSSSSFH</variation>
    <location>
        <begin position="2"/>
        <end position="134"/>
    </location>
</feature>
<feature type="mutagenesis site" description="In nu443; reduces locomotion rate. Resistant to the acetylcholine esterase inhibitor Aldicarb." evidence="13">
    <location>
        <begin position="643"/>
        <end position="707"/>
    </location>
</feature>
<feature type="sequence conflict" description="In Ref. 1; AAA18259." evidence="14" ref="1">
    <original>QP</original>
    <variation>HA</variation>
    <location>
        <begin position="180"/>
        <end position="181"/>
    </location>
</feature>
<feature type="sequence conflict" description="In Ref. 1; AAA18259." evidence="14" ref="1">
    <original>I</original>
    <variation>T</variation>
    <location>
        <position position="544"/>
    </location>
</feature>
<proteinExistence type="evidence at protein level"/>
<dbReference type="EC" id="2.7.11.13"/>
<dbReference type="EMBL" id="U00181">
    <property type="protein sequence ID" value="AAA18259.1"/>
    <property type="molecule type" value="mRNA"/>
</dbReference>
<dbReference type="EMBL" id="U00965">
    <property type="protein sequence ID" value="AAA17996.1"/>
    <property type="molecule type" value="Genomic_DNA"/>
</dbReference>
<dbReference type="EMBL" id="BX284605">
    <property type="protein sequence ID" value="CAB00101.2"/>
    <property type="molecule type" value="Genomic_DNA"/>
</dbReference>
<dbReference type="EMBL" id="Z81497">
    <property type="protein sequence ID" value="CAB00101.2"/>
    <property type="status" value="JOINED"/>
    <property type="molecule type" value="Genomic_DNA"/>
</dbReference>
<dbReference type="EMBL" id="BX284605">
    <property type="protein sequence ID" value="CCD31083.1"/>
    <property type="molecule type" value="Genomic_DNA"/>
</dbReference>
<dbReference type="PIR" id="A53530">
    <property type="entry name" value="A53530"/>
</dbReference>
<dbReference type="PIR" id="T22856">
    <property type="entry name" value="T22856"/>
</dbReference>
<dbReference type="RefSeq" id="NP_001256394.1">
    <molecule id="P34885-2"/>
    <property type="nucleotide sequence ID" value="NM_001269465.2"/>
</dbReference>
<dbReference type="RefSeq" id="NP_001256395.1">
    <molecule id="P34885-1"/>
    <property type="nucleotide sequence ID" value="NM_001269466.4"/>
</dbReference>
<dbReference type="SMR" id="P34885"/>
<dbReference type="BioGRID" id="44672">
    <property type="interactions" value="3"/>
</dbReference>
<dbReference type="DIP" id="DIP-27455N"/>
<dbReference type="FunCoup" id="P34885">
    <property type="interactions" value="1557"/>
</dbReference>
<dbReference type="STRING" id="6239.F57F5.5c.1"/>
<dbReference type="iPTMnet" id="P34885"/>
<dbReference type="PaxDb" id="6239-F57F5.5c"/>
<dbReference type="PeptideAtlas" id="P34885"/>
<dbReference type="EnsemblMetazoa" id="F57F5.5a.1">
    <molecule id="P34885-1"/>
    <property type="protein sequence ID" value="F57F5.5a.1"/>
    <property type="gene ID" value="WBGene00004032"/>
</dbReference>
<dbReference type="EnsemblMetazoa" id="F57F5.5a.2">
    <molecule id="P34885-1"/>
    <property type="protein sequence ID" value="F57F5.5a.2"/>
    <property type="gene ID" value="WBGene00004032"/>
</dbReference>
<dbReference type="EnsemblMetazoa" id="F57F5.5a.3">
    <molecule id="P34885-1"/>
    <property type="protein sequence ID" value="F57F5.5a.3"/>
    <property type="gene ID" value="WBGene00004032"/>
</dbReference>
<dbReference type="EnsemblMetazoa" id="F57F5.5b.1">
    <molecule id="P34885-2"/>
    <property type="protein sequence ID" value="F57F5.5b.1"/>
    <property type="gene ID" value="WBGene00004032"/>
</dbReference>
<dbReference type="GeneID" id="179649"/>
<dbReference type="KEGG" id="cel:CELE_F57F5.5"/>
<dbReference type="UCSC" id="F57F5.5">
    <molecule id="P34885-1"/>
    <property type="organism name" value="c. elegans"/>
</dbReference>
<dbReference type="AGR" id="WB:WBGene00004032"/>
<dbReference type="CTD" id="179649"/>
<dbReference type="WormBase" id="F57F5.5a">
    <molecule id="P34885-1"/>
    <property type="protein sequence ID" value="CE29092"/>
    <property type="gene ID" value="WBGene00004032"/>
    <property type="gene designation" value="pkc-1"/>
</dbReference>
<dbReference type="WormBase" id="F57F5.5b">
    <molecule id="P34885-2"/>
    <property type="protein sequence ID" value="CE46445"/>
    <property type="gene ID" value="WBGene00004032"/>
    <property type="gene designation" value="pkc-1"/>
</dbReference>
<dbReference type="eggNOG" id="KOG0694">
    <property type="taxonomic scope" value="Eukaryota"/>
</dbReference>
<dbReference type="GeneTree" id="ENSGT00940000168328"/>
<dbReference type="InParanoid" id="P34885"/>
<dbReference type="OrthoDB" id="63267at2759"/>
<dbReference type="PhylomeDB" id="P34885"/>
<dbReference type="BRENDA" id="2.7.11.13">
    <property type="organism ID" value="1045"/>
</dbReference>
<dbReference type="Reactome" id="R-CEL-114508">
    <property type="pathway name" value="Effects of PIP2 hydrolysis"/>
</dbReference>
<dbReference type="Reactome" id="R-CEL-1489509">
    <property type="pathway name" value="DAG and IP3 signaling"/>
</dbReference>
<dbReference type="Reactome" id="R-CEL-2029485">
    <property type="pathway name" value="Role of phospholipids in phagocytosis"/>
</dbReference>
<dbReference type="PRO" id="PR:P34885"/>
<dbReference type="Proteomes" id="UP000001940">
    <property type="component" value="Chromosome V"/>
</dbReference>
<dbReference type="Bgee" id="WBGene00004032">
    <property type="expression patterns" value="Expressed in larva and 4 other cell types or tissues"/>
</dbReference>
<dbReference type="ExpressionAtlas" id="P34885">
    <property type="expression patterns" value="baseline and differential"/>
</dbReference>
<dbReference type="GO" id="GO:0098981">
    <property type="term" value="C:cholinergic synapse"/>
    <property type="evidence" value="ECO:0000314"/>
    <property type="project" value="SynGO"/>
</dbReference>
<dbReference type="GO" id="GO:0005737">
    <property type="term" value="C:cytoplasm"/>
    <property type="evidence" value="ECO:0007669"/>
    <property type="project" value="UniProtKB-KW"/>
</dbReference>
<dbReference type="GO" id="GO:0005856">
    <property type="term" value="C:cytoskeleton"/>
    <property type="evidence" value="ECO:0007669"/>
    <property type="project" value="UniProtKB-SubCell"/>
</dbReference>
<dbReference type="GO" id="GO:0016020">
    <property type="term" value="C:membrane"/>
    <property type="evidence" value="ECO:0007669"/>
    <property type="project" value="UniProtKB-SubCell"/>
</dbReference>
<dbReference type="GO" id="GO:0043005">
    <property type="term" value="C:neuron projection"/>
    <property type="evidence" value="ECO:0000315"/>
    <property type="project" value="UniProtKB"/>
</dbReference>
<dbReference type="GO" id="GO:0098793">
    <property type="term" value="C:presynapse"/>
    <property type="evidence" value="ECO:0007669"/>
    <property type="project" value="GOC"/>
</dbReference>
<dbReference type="GO" id="GO:0005524">
    <property type="term" value="F:ATP binding"/>
    <property type="evidence" value="ECO:0007669"/>
    <property type="project" value="UniProtKB-KW"/>
</dbReference>
<dbReference type="GO" id="GO:0004697">
    <property type="term" value="F:diacylglycerol-dependent serine/threonine kinase activity"/>
    <property type="evidence" value="ECO:0000314"/>
    <property type="project" value="WormBase"/>
</dbReference>
<dbReference type="GO" id="GO:0106310">
    <property type="term" value="F:protein serine kinase activity"/>
    <property type="evidence" value="ECO:0007669"/>
    <property type="project" value="RHEA"/>
</dbReference>
<dbReference type="GO" id="GO:0004674">
    <property type="term" value="F:protein serine/threonine kinase activity"/>
    <property type="evidence" value="ECO:0000318"/>
    <property type="project" value="GO_Central"/>
</dbReference>
<dbReference type="GO" id="GO:0008270">
    <property type="term" value="F:zinc ion binding"/>
    <property type="evidence" value="ECO:0007669"/>
    <property type="project" value="UniProtKB-KW"/>
</dbReference>
<dbReference type="GO" id="GO:0008306">
    <property type="term" value="P:associative learning"/>
    <property type="evidence" value="ECO:0000315"/>
    <property type="project" value="UniProtKB"/>
</dbReference>
<dbReference type="GO" id="GO:0007635">
    <property type="term" value="P:chemosensory behavior"/>
    <property type="evidence" value="ECO:0000315"/>
    <property type="project" value="UniProtKB"/>
</dbReference>
<dbReference type="GO" id="GO:0006935">
    <property type="term" value="P:chemotaxis"/>
    <property type="evidence" value="ECO:0000315"/>
    <property type="project" value="WormBase"/>
</dbReference>
<dbReference type="GO" id="GO:0040024">
    <property type="term" value="P:dauer larval development"/>
    <property type="evidence" value="ECO:0000315"/>
    <property type="project" value="UniProtKB"/>
</dbReference>
<dbReference type="GO" id="GO:1990504">
    <property type="term" value="P:dense core granule exocytosis"/>
    <property type="evidence" value="ECO:0000315"/>
    <property type="project" value="WormBase"/>
</dbReference>
<dbReference type="GO" id="GO:0048009">
    <property type="term" value="P:insulin-like growth factor receptor signaling pathway"/>
    <property type="evidence" value="ECO:0000315"/>
    <property type="project" value="UniProtKB"/>
</dbReference>
<dbReference type="GO" id="GO:0035556">
    <property type="term" value="P:intracellular signal transduction"/>
    <property type="evidence" value="ECO:0000318"/>
    <property type="project" value="GO_Central"/>
</dbReference>
<dbReference type="GO" id="GO:0000165">
    <property type="term" value="P:MAPK cascade"/>
    <property type="evidence" value="ECO:0000315"/>
    <property type="project" value="UniProtKB"/>
</dbReference>
<dbReference type="GO" id="GO:2001024">
    <property type="term" value="P:negative regulation of response to drug"/>
    <property type="evidence" value="ECO:0000315"/>
    <property type="project" value="UniProtKB"/>
</dbReference>
<dbReference type="GO" id="GO:0007218">
    <property type="term" value="P:neuropeptide signaling pathway"/>
    <property type="evidence" value="ECO:0000315"/>
    <property type="project" value="UniProtKB"/>
</dbReference>
<dbReference type="GO" id="GO:0007269">
    <property type="term" value="P:neurotransmitter secretion"/>
    <property type="evidence" value="ECO:0000315"/>
    <property type="project" value="WormBase"/>
</dbReference>
<dbReference type="GO" id="GO:0050927">
    <property type="term" value="P:positive regulation of positive chemotaxis"/>
    <property type="evidence" value="ECO:0000315"/>
    <property type="project" value="UniProtKB"/>
</dbReference>
<dbReference type="GO" id="GO:0006468">
    <property type="term" value="P:protein phosphorylation"/>
    <property type="evidence" value="ECO:0000303"/>
    <property type="project" value="UniProtKB"/>
</dbReference>
<dbReference type="GO" id="GO:0050920">
    <property type="term" value="P:regulation of chemotaxis"/>
    <property type="evidence" value="ECO:0000316"/>
    <property type="project" value="UniProtKB"/>
</dbReference>
<dbReference type="GO" id="GO:0040012">
    <property type="term" value="P:regulation of locomotion"/>
    <property type="evidence" value="ECO:0000315"/>
    <property type="project" value="WormBase"/>
</dbReference>
<dbReference type="GO" id="GO:0099161">
    <property type="term" value="P:regulation of presynaptic dense core granule exocytosis"/>
    <property type="evidence" value="ECO:0000314"/>
    <property type="project" value="SynGO"/>
</dbReference>
<dbReference type="GO" id="GO:1902074">
    <property type="term" value="P:response to salt"/>
    <property type="evidence" value="ECO:0000315"/>
    <property type="project" value="UniProtKB"/>
</dbReference>
<dbReference type="GO" id="GO:0007606">
    <property type="term" value="P:sensory perception of chemical stimulus"/>
    <property type="evidence" value="ECO:0000315"/>
    <property type="project" value="UniProtKB"/>
</dbReference>
<dbReference type="GO" id="GO:0050975">
    <property type="term" value="P:sensory perception of touch"/>
    <property type="evidence" value="ECO:0000315"/>
    <property type="project" value="UniProtKB"/>
</dbReference>
<dbReference type="GO" id="GO:0050893">
    <property type="term" value="P:sensory processing"/>
    <property type="evidence" value="ECO:0000315"/>
    <property type="project" value="UniProtKB"/>
</dbReference>
<dbReference type="GO" id="GO:0016079">
    <property type="term" value="P:synaptic vesicle exocytosis"/>
    <property type="evidence" value="ECO:0000315"/>
    <property type="project" value="UniProtKB"/>
</dbReference>
<dbReference type="CDD" id="cd20835">
    <property type="entry name" value="C1_nPKC_epsilon-like_rpt1"/>
    <property type="match status" value="1"/>
</dbReference>
<dbReference type="CDD" id="cd20838">
    <property type="entry name" value="C1_nPKC_epsilon-like_rpt2"/>
    <property type="match status" value="1"/>
</dbReference>
<dbReference type="CDD" id="cd04014">
    <property type="entry name" value="C2_PKC_epsilon"/>
    <property type="match status" value="1"/>
</dbReference>
<dbReference type="CDD" id="cd05591">
    <property type="entry name" value="STKc_nPKC_epsilon"/>
    <property type="match status" value="1"/>
</dbReference>
<dbReference type="FunFam" id="3.30.200.20:FF:000080">
    <property type="entry name" value="Protein kinase C"/>
    <property type="match status" value="1"/>
</dbReference>
<dbReference type="FunFam" id="3.30.60.20:FF:000063">
    <property type="entry name" value="Protein kinase C"/>
    <property type="match status" value="1"/>
</dbReference>
<dbReference type="FunFam" id="3.30.60.20:FF:000003">
    <property type="entry name" value="Protein kinase C delta"/>
    <property type="match status" value="1"/>
</dbReference>
<dbReference type="FunFam" id="1.10.510.10:FF:000126">
    <property type="entry name" value="Protein kinase C epsilon"/>
    <property type="match status" value="1"/>
</dbReference>
<dbReference type="Gene3D" id="3.30.60.20">
    <property type="match status" value="2"/>
</dbReference>
<dbReference type="Gene3D" id="2.60.40.150">
    <property type="entry name" value="C2 domain"/>
    <property type="match status" value="1"/>
</dbReference>
<dbReference type="Gene3D" id="3.30.200.20">
    <property type="entry name" value="Phosphorylase Kinase, domain 1"/>
    <property type="match status" value="1"/>
</dbReference>
<dbReference type="Gene3D" id="1.10.510.10">
    <property type="entry name" value="Transferase(Phosphotransferase) domain 1"/>
    <property type="match status" value="1"/>
</dbReference>
<dbReference type="InterPro" id="IPR000961">
    <property type="entry name" value="AGC-kinase_C"/>
</dbReference>
<dbReference type="InterPro" id="IPR046349">
    <property type="entry name" value="C1-like_sf"/>
</dbReference>
<dbReference type="InterPro" id="IPR000008">
    <property type="entry name" value="C2_dom"/>
</dbReference>
<dbReference type="InterPro" id="IPR035892">
    <property type="entry name" value="C2_domain_sf"/>
</dbReference>
<dbReference type="InterPro" id="IPR020454">
    <property type="entry name" value="DAG/PE-bd"/>
</dbReference>
<dbReference type="InterPro" id="IPR011009">
    <property type="entry name" value="Kinase-like_dom_sf"/>
</dbReference>
<dbReference type="InterPro" id="IPR034669">
    <property type="entry name" value="nPKC_epsilon"/>
</dbReference>
<dbReference type="InterPro" id="IPR002219">
    <property type="entry name" value="PE/DAG-bd"/>
</dbReference>
<dbReference type="InterPro" id="IPR017892">
    <property type="entry name" value="Pkinase_C"/>
</dbReference>
<dbReference type="InterPro" id="IPR014376">
    <property type="entry name" value="Prot_kin_PKC_delta"/>
</dbReference>
<dbReference type="InterPro" id="IPR000719">
    <property type="entry name" value="Prot_kinase_dom"/>
</dbReference>
<dbReference type="InterPro" id="IPR017441">
    <property type="entry name" value="Protein_kinase_ATP_BS"/>
</dbReference>
<dbReference type="InterPro" id="IPR008271">
    <property type="entry name" value="Ser/Thr_kinase_AS"/>
</dbReference>
<dbReference type="PANTHER" id="PTHR24351">
    <property type="entry name" value="RIBOSOMAL PROTEIN S6 KINASE"/>
    <property type="match status" value="1"/>
</dbReference>
<dbReference type="Pfam" id="PF00130">
    <property type="entry name" value="C1_1"/>
    <property type="match status" value="2"/>
</dbReference>
<dbReference type="Pfam" id="PF00168">
    <property type="entry name" value="C2"/>
    <property type="match status" value="1"/>
</dbReference>
<dbReference type="Pfam" id="PF00069">
    <property type="entry name" value="Pkinase"/>
    <property type="match status" value="1"/>
</dbReference>
<dbReference type="Pfam" id="PF00433">
    <property type="entry name" value="Pkinase_C"/>
    <property type="match status" value="1"/>
</dbReference>
<dbReference type="PIRSF" id="PIRSF000551">
    <property type="entry name" value="PKC_delta"/>
    <property type="match status" value="1"/>
</dbReference>
<dbReference type="PRINTS" id="PR00008">
    <property type="entry name" value="DAGPEDOMAIN"/>
</dbReference>
<dbReference type="SMART" id="SM00109">
    <property type="entry name" value="C1"/>
    <property type="match status" value="2"/>
</dbReference>
<dbReference type="SMART" id="SM00239">
    <property type="entry name" value="C2"/>
    <property type="match status" value="1"/>
</dbReference>
<dbReference type="SMART" id="SM00133">
    <property type="entry name" value="S_TK_X"/>
    <property type="match status" value="1"/>
</dbReference>
<dbReference type="SMART" id="SM00220">
    <property type="entry name" value="S_TKc"/>
    <property type="match status" value="1"/>
</dbReference>
<dbReference type="SUPFAM" id="SSF49562">
    <property type="entry name" value="C2 domain (Calcium/lipid-binding domain, CaLB)"/>
    <property type="match status" value="1"/>
</dbReference>
<dbReference type="SUPFAM" id="SSF57889">
    <property type="entry name" value="Cysteine-rich domain"/>
    <property type="match status" value="2"/>
</dbReference>
<dbReference type="SUPFAM" id="SSF56112">
    <property type="entry name" value="Protein kinase-like (PK-like)"/>
    <property type="match status" value="1"/>
</dbReference>
<dbReference type="PROSITE" id="PS51285">
    <property type="entry name" value="AGC_KINASE_CTER"/>
    <property type="match status" value="1"/>
</dbReference>
<dbReference type="PROSITE" id="PS50004">
    <property type="entry name" value="C2"/>
    <property type="match status" value="1"/>
</dbReference>
<dbReference type="PROSITE" id="PS00107">
    <property type="entry name" value="PROTEIN_KINASE_ATP"/>
    <property type="match status" value="1"/>
</dbReference>
<dbReference type="PROSITE" id="PS50011">
    <property type="entry name" value="PROTEIN_KINASE_DOM"/>
    <property type="match status" value="1"/>
</dbReference>
<dbReference type="PROSITE" id="PS00108">
    <property type="entry name" value="PROTEIN_KINASE_ST"/>
    <property type="match status" value="1"/>
</dbReference>
<dbReference type="PROSITE" id="PS00479">
    <property type="entry name" value="ZF_DAG_PE_1"/>
    <property type="match status" value="2"/>
</dbReference>
<dbReference type="PROSITE" id="PS50081">
    <property type="entry name" value="ZF_DAG_PE_2"/>
    <property type="match status" value="2"/>
</dbReference>
<protein>
    <recommendedName>
        <fullName>Protein kinase C-like 1B</fullName>
        <shortName>PKC1B</shortName>
        <ecNumber>2.7.11.13</ecNumber>
    </recommendedName>
</protein>
<name>KPC1B_CAEEL</name>
<sequence length="707" mass="80151">MLFTGTVRVRVLEARQLRPTEWSRRFRQDEAATAAIDSYVNVDWDEYHIGKTQVRPKTNEPRWNEEFTASGVHQGKAIGFSVFHSCVMPPDDFVANTRIAFDQLKIGSANDIWVDLEPHGQLHVVVEMHGTNVEDVHSHNKTRVFKERTNAFNDRQRRGAMRRKIHEVTGHKFMALFLRQPTFCAHCKEFIWGIGKQGYQCQICTVVVHKRCHEDVVWKCPGNKADAVEELGKEIQETGAGRFNINMPHRFSVHSYKRPTFCDHCGSMLYGLINQGLQCSTCKLNVHKRCQRNVANNCGINAKQMAAELAQLGLTGDKMSIRSKKKPSIMTDTSTDISGSSNSENSGYLQQISEDDSGTTSSRSASKVPGGTLSIHDFTFMKVLGKGSFGKVMLAERKGTDEVYAIKILKKDVIVQDDDVECTMCEKRILSLAAKHPFLTALHSSFQTSDRLFFVMEYVNGGDLMFQIQRARKFDESRARFYAAEVTCALQFLHRNDVIYRDLKLDNILLDAEGHCRLADFGMCKEGINKDNLTSTFCGTPDYIAPEILQEMEYGVSVDWWALGVLMYEMMAGQPPFEADNEDDLFEAILNDDVLYPVWLSKEAVNILKAFMTKNAGKRLGCVVSQGGEDAIRAHPFFREIDWDALESRQVKPPFKPKIKSKRDANNFDSDFTKEEPVLTPSDPAVVRAINQDEFRGFSFINPHFTY</sequence>
<keyword id="KW-0025">Alternative splicing</keyword>
<keyword id="KW-0067">ATP-binding</keyword>
<keyword id="KW-0963">Cytoplasm</keyword>
<keyword id="KW-0206">Cytoskeleton</keyword>
<keyword id="KW-0418">Kinase</keyword>
<keyword id="KW-0472">Membrane</keyword>
<keyword id="KW-0479">Metal-binding</keyword>
<keyword id="KW-0547">Nucleotide-binding</keyword>
<keyword id="KW-0597">Phosphoprotein</keyword>
<keyword id="KW-1185">Reference proteome</keyword>
<keyword id="KW-0677">Repeat</keyword>
<keyword id="KW-0723">Serine/threonine-protein kinase</keyword>
<keyword id="KW-0808">Transferase</keyword>
<keyword id="KW-0862">Zinc</keyword>
<keyword id="KW-0863">Zinc-finger</keyword>
<gene>
    <name evidence="15" type="primary">pkc-1</name>
    <name evidence="15" type="synonym">kin-13</name>
    <name evidence="15" type="synonym">ttx-4</name>
    <name evidence="15" type="ORF">F57F5.5</name>
</gene>
<accession>P34885</accession>
<accession>G3MU31</accession>
<accession>Q20953</accession>
<evidence type="ECO:0000255" key="1">
    <source>
        <dbReference type="PROSITE-ProRule" id="PRU00041"/>
    </source>
</evidence>
<evidence type="ECO:0000255" key="2">
    <source>
        <dbReference type="PROSITE-ProRule" id="PRU00159"/>
    </source>
</evidence>
<evidence type="ECO:0000255" key="3">
    <source>
        <dbReference type="PROSITE-ProRule" id="PRU00226"/>
    </source>
</evidence>
<evidence type="ECO:0000255" key="4">
    <source>
        <dbReference type="PROSITE-ProRule" id="PRU00618"/>
    </source>
</evidence>
<evidence type="ECO:0000255" key="5">
    <source>
        <dbReference type="PROSITE-ProRule" id="PRU10027"/>
    </source>
</evidence>
<evidence type="ECO:0000256" key="6">
    <source>
        <dbReference type="SAM" id="MobiDB-lite"/>
    </source>
</evidence>
<evidence type="ECO:0000269" key="7">
    <source>
    </source>
</evidence>
<evidence type="ECO:0000269" key="8">
    <source>
    </source>
</evidence>
<evidence type="ECO:0000269" key="9">
    <source>
    </source>
</evidence>
<evidence type="ECO:0000269" key="10">
    <source>
    </source>
</evidence>
<evidence type="ECO:0000269" key="11">
    <source>
    </source>
</evidence>
<evidence type="ECO:0000269" key="12">
    <source>
    </source>
</evidence>
<evidence type="ECO:0000269" key="13">
    <source>
    </source>
</evidence>
<evidence type="ECO:0000305" key="14"/>
<evidence type="ECO:0000312" key="15">
    <source>
        <dbReference type="WormBase" id="F57F5.5a"/>
    </source>
</evidence>
<evidence type="ECO:0000312" key="16">
    <source>
        <dbReference type="WormBase" id="F57F5.5b"/>
    </source>
</evidence>
<organism>
    <name type="scientific">Caenorhabditis elegans</name>
    <dbReference type="NCBI Taxonomy" id="6239"/>
    <lineage>
        <taxon>Eukaryota</taxon>
        <taxon>Metazoa</taxon>
        <taxon>Ecdysozoa</taxon>
        <taxon>Nematoda</taxon>
        <taxon>Chromadorea</taxon>
        <taxon>Rhabditida</taxon>
        <taxon>Rhabditina</taxon>
        <taxon>Rhabditomorpha</taxon>
        <taxon>Rhabditoidea</taxon>
        <taxon>Rhabditidae</taxon>
        <taxon>Peloderinae</taxon>
        <taxon>Caenorhabditis</taxon>
    </lineage>
</organism>
<reference key="1">
    <citation type="journal article" date="1994" name="J. Biol. Chem.">
        <title>Structure and expression of a novel, neuronal protein kinase C (PKC1B) from Caenorhabditis elegans. PKC1B is expressed selectively in neurons that receive, transmit, and process environmental signals.</title>
        <authorList>
            <person name="Land M."/>
            <person name="Islas-Trejo A."/>
            <person name="Freedman J.H."/>
            <person name="Rubin C.S."/>
        </authorList>
    </citation>
    <scope>NUCLEOTIDE SEQUENCE [MRNA]</scope>
    <scope>NUCLEOTIDE SEQUENCE [GENOMIC DNA] OF 1-11 (ISOFORM A)</scope>
    <source>
        <strain>Bristol N2</strain>
    </source>
</reference>
<reference key="2">
    <citation type="journal article" date="1998" name="Science">
        <title>Genome sequence of the nematode C. elegans: a platform for investigating biology.</title>
        <authorList>
            <consortium name="The C. elegans sequencing consortium"/>
        </authorList>
    </citation>
    <scope>NUCLEOTIDE SEQUENCE [LARGE SCALE GENOMIC DNA]</scope>
    <source>
        <strain>Bristol N2</strain>
    </source>
</reference>
<reference key="3">
    <citation type="journal article" date="2005" name="EMBO J.">
        <title>Diverse regulation of sensory signaling by C. elegans nPKC-epsilon/eta TTX-4.</title>
        <authorList>
            <person name="Okochi Y."/>
            <person name="Kimura K.D."/>
            <person name="Ohta A."/>
            <person name="Mori I."/>
        </authorList>
    </citation>
    <scope>FUNCTION</scope>
    <scope>DISRUPTION PHENOTYPE</scope>
    <source>
        <strain>IK105</strain>
    </source>
</reference>
<reference key="4">
    <citation type="journal article" date="2007" name="Nat. Neurosci.">
        <title>PKC-1 regulates secretion of neuropeptides.</title>
        <authorList>
            <person name="Sieburth D."/>
            <person name="Madison J.M."/>
            <person name="Kaplan J.M."/>
        </authorList>
    </citation>
    <scope>FUNCTION</scope>
    <scope>DISRUPTION PHENOTYPE</scope>
    <source>
        <strain>IK130</strain>
    </source>
</reference>
<reference key="5">
    <citation type="journal article" date="2010" name="Genetics">
        <title>Reversal of salt preference is directed by the insulin/PI3K and Gq/PKC signaling in Caenorhabditis elegans.</title>
        <authorList>
            <person name="Adachi T."/>
            <person name="Kunitomo H."/>
            <person name="Tomioka M."/>
            <person name="Ohno H."/>
            <person name="Okochi Y."/>
            <person name="Mori I."/>
            <person name="Iino Y."/>
        </authorList>
    </citation>
    <scope>DISRUPTION PHENOTYPE</scope>
    <source>
        <strain>IK130</strain>
    </source>
</reference>
<reference key="6">
    <citation type="journal article" date="2010" name="Mol. Biol. Cell">
        <title>Mitochondrial dysfunction confers resistance to multiple drugs in Caenorhabditis elegans.</title>
        <authorList>
            <person name="Zubovych I.O."/>
            <person name="Straud S."/>
            <person name="Roth M.G."/>
        </authorList>
    </citation>
    <scope>FUNCTION</scope>
    <scope>DISRUPTION PHENOTYPE</scope>
    <source>
        <strain>IK105</strain>
    </source>
</reference>
<reference key="7">
    <citation type="journal article" date="2011" name="Aging Cell">
        <title>pkc-1 regulates daf-2 insulin/IGF signalling-dependent control of dauer formation in Caenorhabditis elegans.</title>
        <authorList>
            <person name="Monje J.M."/>
            <person name="Brokate-Llanos A.M."/>
            <person name="Perez-Jimenez M.M."/>
            <person name="Fidalgo M.A."/>
            <person name="Munoz M.J."/>
        </authorList>
    </citation>
    <scope>FUNCTION</scope>
    <source>
        <strain>IK130</strain>
    </source>
</reference>
<reference key="8">
    <citation type="journal article" date="2011" name="Genes Brain Behav.">
        <title>PKC-1 acts with the ERK MAPK signaling pathway to regulate Caenorhabditis elegans mechanosensory response.</title>
        <authorList>
            <person name="Hyde R."/>
            <person name="Corkins M.E."/>
            <person name="Somers G.A."/>
            <person name="Hart A.C."/>
        </authorList>
    </citation>
    <scope>FUNCTION</scope>
    <scope>DISRUPTION PHENOTYPE</scope>
    <source>
        <strain>RB781</strain>
    </source>
</reference>
<reference key="9">
    <citation type="journal article" date="2012" name="J. Neurosci.">
        <title>PKC-2 phosphorylation of UNC-18 Ser322 in AFD neurons regulates temperature dependency of locomotion.</title>
        <authorList>
            <person name="Edwards M.R."/>
            <person name="Johnson J.R."/>
            <person name="Rankin K."/>
            <person name="Jenkins R.E."/>
            <person name="Maguire C."/>
            <person name="Morgan A."/>
            <person name="Burgoyne R.D."/>
            <person name="Barclay J.W."/>
        </authorList>
    </citation>
    <scope>MUTAGENESIS OF 643-TRP--TYR-707</scope>
</reference>
<comment type="function">
    <text evidence="7 8 9 11 12">PKC is activated by diacylglycerol which in turn phosphorylates a range of cellular proteins. PKC also serves as the receptor for phorbol esters, a class of tumor promoters. Involved in neuropeptide secretion in motor axons. Likely to act via the extracellular signal-regulated kinase/mitogen-activated protein kinase (ERK/MAPK) pathway in the signaling response to various sensory neurons; temperature, odor, taste, and osmolality. Its role in regulation differs depending on the neuron in which it is acting; thermosensation in AFD neurons, osmolality in ASH neurons, olfactory perception in AWA and AWC neurons. Promotes dauer formation mediated by the insulin/IGF pathway. Required for resistance to antimitotic toxins.</text>
</comment>
<comment type="catalytic activity">
    <reaction>
        <text>L-seryl-[protein] + ATP = O-phospho-L-seryl-[protein] + ADP + H(+)</text>
        <dbReference type="Rhea" id="RHEA:17989"/>
        <dbReference type="Rhea" id="RHEA-COMP:9863"/>
        <dbReference type="Rhea" id="RHEA-COMP:11604"/>
        <dbReference type="ChEBI" id="CHEBI:15378"/>
        <dbReference type="ChEBI" id="CHEBI:29999"/>
        <dbReference type="ChEBI" id="CHEBI:30616"/>
        <dbReference type="ChEBI" id="CHEBI:83421"/>
        <dbReference type="ChEBI" id="CHEBI:456216"/>
        <dbReference type="EC" id="2.7.11.13"/>
    </reaction>
</comment>
<comment type="catalytic activity">
    <reaction>
        <text>L-threonyl-[protein] + ATP = O-phospho-L-threonyl-[protein] + ADP + H(+)</text>
        <dbReference type="Rhea" id="RHEA:46608"/>
        <dbReference type="Rhea" id="RHEA-COMP:11060"/>
        <dbReference type="Rhea" id="RHEA-COMP:11605"/>
        <dbReference type="ChEBI" id="CHEBI:15378"/>
        <dbReference type="ChEBI" id="CHEBI:30013"/>
        <dbReference type="ChEBI" id="CHEBI:30616"/>
        <dbReference type="ChEBI" id="CHEBI:61977"/>
        <dbReference type="ChEBI" id="CHEBI:456216"/>
        <dbReference type="EC" id="2.7.11.13"/>
    </reaction>
</comment>
<comment type="subcellular location">
    <subcellularLocation>
        <location>Membrane</location>
        <topology>Peripheral membrane protein</topology>
    </subcellularLocation>
    <subcellularLocation>
        <location>Cytoplasm</location>
        <location>Cytoskeleton</location>
    </subcellularLocation>
    <text>Associated with membranes and the cytoskeleton.</text>
</comment>
<comment type="alternative products">
    <event type="alternative splicing"/>
    <isoform>
        <id>P34885-1</id>
        <name evidence="15">a</name>
        <sequence type="displayed"/>
    </isoform>
    <isoform>
        <id>P34885-2</id>
        <name evidence="16">b</name>
        <sequence type="described" ref="VSP_044041"/>
    </isoform>
</comment>
<comment type="tissue specificity">
    <text>Expressed selectively in neurons that receive, transmit and process environmental signals.</text>
</comment>
<comment type="disruption phenotype">
    <text evidence="7 8 9 10 11">Attenuated response to nose touch stimulation. Defects in salt attraction. Disrupted chemotaxis. Hyperactivation of AFD thermosensory neurons but inactivation of the ASH neurons. Reduced dauer formation. Protection from hemiasterlin toxicity by carbonyl cyanide p-[trifluoromethoxy]-phenyl-hydrazone (FCCP) greatly reduced. Reduced neuropeptide secretion.</text>
</comment>
<comment type="similarity">
    <text evidence="14">Belongs to the protein kinase superfamily. AGC Ser/Thr protein kinase family. PKC subfamily.</text>
</comment>